<keyword id="KW-0004">4Fe-4S</keyword>
<keyword id="KW-0408">Iron</keyword>
<keyword id="KW-0411">Iron-sulfur</keyword>
<keyword id="KW-0479">Metal-binding</keyword>
<keyword id="KW-0489">Methyltransferase</keyword>
<keyword id="KW-1185">Reference proteome</keyword>
<keyword id="KW-0698">rRNA processing</keyword>
<keyword id="KW-0949">S-adenosyl-L-methionine</keyword>
<keyword id="KW-0808">Transferase</keyword>
<proteinExistence type="inferred from homology"/>
<sequence>MPKLNCHHFEQNRCNSCQWLHKSYTEQLAEKTSDLKRLVSPYLLQSTEFLPAVTSPLAHFRNKAKMVVTGSVERPILGILNDDGTGTDLTDCPLYPQAFTPLFPILKTFIGRAGLVPYNVAKKRGELKYILITQSQHNQSLMIRFVLRSELKRPLVERELPMLLAQLPEKSVVSLNIQPQHSAILEGEQEIFLTEQQVLEERFNQIPLFIRPQGFFQTNPTVASQLYHTAQEWIKERPITQLWDLFCGVGGFGLHCANTLQTNNPNVALTGIEISASAIASATKSAQQLGLQNVKFASLDSAQFALNEQGTTPDLVIVNPPRRGIGKPLAEFINQLGSPYLIYSSCNAETMAKDFASLSHYELKKVQLFDMFPHTAHYEVLTFLVNKII</sequence>
<dbReference type="EC" id="2.1.1.189" evidence="1"/>
<dbReference type="EMBL" id="CP001321">
    <property type="protein sequence ID" value="ACL32631.1"/>
    <property type="molecule type" value="Genomic_DNA"/>
</dbReference>
<dbReference type="RefSeq" id="WP_015939570.1">
    <property type="nucleotide sequence ID" value="NC_011852.1"/>
</dbReference>
<dbReference type="SMR" id="B8F5M9"/>
<dbReference type="STRING" id="557723.HAPS_1012"/>
<dbReference type="KEGG" id="hap:HAPS_1012"/>
<dbReference type="PATRIC" id="fig|557723.8.peg.1010"/>
<dbReference type="HOGENOM" id="CLU_014689_0_0_6"/>
<dbReference type="Proteomes" id="UP000006743">
    <property type="component" value="Chromosome"/>
</dbReference>
<dbReference type="GO" id="GO:0051539">
    <property type="term" value="F:4 iron, 4 sulfur cluster binding"/>
    <property type="evidence" value="ECO:0007669"/>
    <property type="project" value="UniProtKB-KW"/>
</dbReference>
<dbReference type="GO" id="GO:0005506">
    <property type="term" value="F:iron ion binding"/>
    <property type="evidence" value="ECO:0007669"/>
    <property type="project" value="UniProtKB-UniRule"/>
</dbReference>
<dbReference type="GO" id="GO:0070041">
    <property type="term" value="F:rRNA (uridine-C5-)-methyltransferase activity"/>
    <property type="evidence" value="ECO:0007669"/>
    <property type="project" value="UniProtKB-UniRule"/>
</dbReference>
<dbReference type="GO" id="GO:0070475">
    <property type="term" value="P:rRNA base methylation"/>
    <property type="evidence" value="ECO:0007669"/>
    <property type="project" value="TreeGrafter"/>
</dbReference>
<dbReference type="CDD" id="cd02440">
    <property type="entry name" value="AdoMet_MTases"/>
    <property type="match status" value="1"/>
</dbReference>
<dbReference type="Gene3D" id="2.40.50.1070">
    <property type="match status" value="1"/>
</dbReference>
<dbReference type="Gene3D" id="3.40.50.150">
    <property type="entry name" value="Vaccinia Virus protein VP39"/>
    <property type="match status" value="1"/>
</dbReference>
<dbReference type="HAMAP" id="MF_01012">
    <property type="entry name" value="23SrRNA_methyltr_RlmC"/>
    <property type="match status" value="1"/>
</dbReference>
<dbReference type="InterPro" id="IPR011825">
    <property type="entry name" value="23SrRNA_MeTrfase_RlmC"/>
</dbReference>
<dbReference type="InterPro" id="IPR030390">
    <property type="entry name" value="MeTrfase_TrmA_AS"/>
</dbReference>
<dbReference type="InterPro" id="IPR030391">
    <property type="entry name" value="MeTrfase_TrmA_CS"/>
</dbReference>
<dbReference type="InterPro" id="IPR029063">
    <property type="entry name" value="SAM-dependent_MTases_sf"/>
</dbReference>
<dbReference type="InterPro" id="IPR010280">
    <property type="entry name" value="U5_MeTrfase_fam"/>
</dbReference>
<dbReference type="NCBIfam" id="TIGR02085">
    <property type="entry name" value="meth_trns_rumB"/>
    <property type="match status" value="1"/>
</dbReference>
<dbReference type="PANTHER" id="PTHR11061">
    <property type="entry name" value="RNA M5U METHYLTRANSFERASE"/>
    <property type="match status" value="1"/>
</dbReference>
<dbReference type="PANTHER" id="PTHR11061:SF30">
    <property type="entry name" value="TRNA (URACIL(54)-C(5))-METHYLTRANSFERASE"/>
    <property type="match status" value="1"/>
</dbReference>
<dbReference type="Pfam" id="PF05958">
    <property type="entry name" value="tRNA_U5-meth_tr"/>
    <property type="match status" value="1"/>
</dbReference>
<dbReference type="SUPFAM" id="SSF53335">
    <property type="entry name" value="S-adenosyl-L-methionine-dependent methyltransferases"/>
    <property type="match status" value="1"/>
</dbReference>
<dbReference type="PROSITE" id="PS51687">
    <property type="entry name" value="SAM_MT_RNA_M5U"/>
    <property type="match status" value="1"/>
</dbReference>
<dbReference type="PROSITE" id="PS01230">
    <property type="entry name" value="TRMA_1"/>
    <property type="match status" value="1"/>
</dbReference>
<dbReference type="PROSITE" id="PS01231">
    <property type="entry name" value="TRMA_2"/>
    <property type="match status" value="1"/>
</dbReference>
<protein>
    <recommendedName>
        <fullName evidence="1">23S rRNA (uracil(747)-C(5))-methyltransferase RlmC</fullName>
        <ecNumber evidence="1">2.1.1.189</ecNumber>
    </recommendedName>
    <alternativeName>
        <fullName evidence="1">23S rRNA(m5U747)-methyltransferase</fullName>
    </alternativeName>
</protein>
<feature type="chain" id="PRO_0000414819" description="23S rRNA (uracil(747)-C(5))-methyltransferase RlmC">
    <location>
        <begin position="1"/>
        <end position="389"/>
    </location>
</feature>
<feature type="active site" description="Nucleophile" evidence="1">
    <location>
        <position position="346"/>
    </location>
</feature>
<feature type="binding site" evidence="1">
    <location>
        <position position="6"/>
    </location>
    <ligand>
        <name>[4Fe-4S] cluster</name>
        <dbReference type="ChEBI" id="CHEBI:49883"/>
    </ligand>
</feature>
<feature type="binding site" evidence="1">
    <location>
        <position position="14"/>
    </location>
    <ligand>
        <name>[4Fe-4S] cluster</name>
        <dbReference type="ChEBI" id="CHEBI:49883"/>
    </ligand>
</feature>
<feature type="binding site" evidence="1">
    <location>
        <position position="17"/>
    </location>
    <ligand>
        <name>[4Fe-4S] cluster</name>
        <dbReference type="ChEBI" id="CHEBI:49883"/>
    </ligand>
</feature>
<feature type="binding site" evidence="1">
    <location>
        <position position="92"/>
    </location>
    <ligand>
        <name>[4Fe-4S] cluster</name>
        <dbReference type="ChEBI" id="CHEBI:49883"/>
    </ligand>
</feature>
<feature type="binding site" evidence="1">
    <location>
        <position position="217"/>
    </location>
    <ligand>
        <name>S-adenosyl-L-methionine</name>
        <dbReference type="ChEBI" id="CHEBI:59789"/>
    </ligand>
</feature>
<feature type="binding site" evidence="1">
    <location>
        <position position="246"/>
    </location>
    <ligand>
        <name>S-adenosyl-L-methionine</name>
        <dbReference type="ChEBI" id="CHEBI:59789"/>
    </ligand>
</feature>
<feature type="binding site" evidence="1">
    <location>
        <position position="273"/>
    </location>
    <ligand>
        <name>S-adenosyl-L-methionine</name>
        <dbReference type="ChEBI" id="CHEBI:59789"/>
    </ligand>
</feature>
<feature type="binding site" evidence="1">
    <location>
        <position position="319"/>
    </location>
    <ligand>
        <name>S-adenosyl-L-methionine</name>
        <dbReference type="ChEBI" id="CHEBI:59789"/>
    </ligand>
</feature>
<reference key="1">
    <citation type="journal article" date="2009" name="J. Bacteriol.">
        <title>Complete genome sequence of Haemophilus parasuis SH0165.</title>
        <authorList>
            <person name="Yue M."/>
            <person name="Yang F."/>
            <person name="Yang J."/>
            <person name="Bei W."/>
            <person name="Cai X."/>
            <person name="Chen L."/>
            <person name="Dong J."/>
            <person name="Zhou R."/>
            <person name="Jin M."/>
            <person name="Jin Q."/>
            <person name="Chen H."/>
        </authorList>
    </citation>
    <scope>NUCLEOTIDE SEQUENCE [LARGE SCALE GENOMIC DNA]</scope>
    <source>
        <strain>SH0165</strain>
    </source>
</reference>
<organism>
    <name type="scientific">Glaesserella parasuis serovar 5 (strain SH0165)</name>
    <name type="common">Haemophilus parasuis</name>
    <dbReference type="NCBI Taxonomy" id="557723"/>
    <lineage>
        <taxon>Bacteria</taxon>
        <taxon>Pseudomonadati</taxon>
        <taxon>Pseudomonadota</taxon>
        <taxon>Gammaproteobacteria</taxon>
        <taxon>Pasteurellales</taxon>
        <taxon>Pasteurellaceae</taxon>
        <taxon>Glaesserella</taxon>
    </lineage>
</organism>
<name>RLMC_GLAP5</name>
<evidence type="ECO:0000255" key="1">
    <source>
        <dbReference type="HAMAP-Rule" id="MF_01012"/>
    </source>
</evidence>
<gene>
    <name evidence="1" type="primary">rlmC</name>
    <name type="synonym">rumB</name>
    <name type="ordered locus">HAPS_1012</name>
</gene>
<comment type="function">
    <text evidence="1">Catalyzes the formation of 5-methyl-uridine at position 747 (m5U747) in 23S rRNA.</text>
</comment>
<comment type="catalytic activity">
    <reaction evidence="1">
        <text>uridine(747) in 23S rRNA + S-adenosyl-L-methionine = 5-methyluridine(747) in 23S rRNA + S-adenosyl-L-homocysteine + H(+)</text>
        <dbReference type="Rhea" id="RHEA:42628"/>
        <dbReference type="Rhea" id="RHEA-COMP:10154"/>
        <dbReference type="Rhea" id="RHEA-COMP:10155"/>
        <dbReference type="ChEBI" id="CHEBI:15378"/>
        <dbReference type="ChEBI" id="CHEBI:57856"/>
        <dbReference type="ChEBI" id="CHEBI:59789"/>
        <dbReference type="ChEBI" id="CHEBI:65315"/>
        <dbReference type="ChEBI" id="CHEBI:74447"/>
        <dbReference type="EC" id="2.1.1.189"/>
    </reaction>
</comment>
<comment type="similarity">
    <text evidence="1">Belongs to the class I-like SAM-binding methyltransferase superfamily. RNA M5U methyltransferase family. RlmC subfamily.</text>
</comment>
<accession>B8F5M9</accession>